<protein>
    <recommendedName>
        <fullName evidence="1">Aspartate carbamoyltransferase catalytic subunit</fullName>
        <ecNumber evidence="1">2.1.3.2</ecNumber>
    </recommendedName>
    <alternativeName>
        <fullName evidence="1">Aspartate transcarbamylase</fullName>
        <shortName evidence="1">ATCase</shortName>
    </alternativeName>
</protein>
<gene>
    <name evidence="1" type="primary">pyrB</name>
    <name type="ordered locus">Fjoh_4545</name>
</gene>
<accession>A5FB79</accession>
<sequence>MKELSVDHLLGIKYINENDINLIFETADHFKEVINRPIKKVPSLRDITIANIFFENSTRTKLSFELAQKRLSADVISFSAAQSSVKKGETLIDTVNNILSMKVDMVVMRHSNPGAAYFLSKNVKASIVNAGDGAHEHPTQALLDSYSIREKLGDVAGKKVVIVGDILHSRVALSNIYALQMQGAEVKVCGPKTLIPRYIESLGVTVEPNLRKALEWCDVANMLRVQNERMDVNFFPSTREYAQQYGVDKPLLDSLNKEIVIMHPGPINRGVEITSEVADSDHSVILNQVENGVAIRMAVIYLLASKIQ</sequence>
<name>PYRB_FLAJ1</name>
<feature type="chain" id="PRO_1000073730" description="Aspartate carbamoyltransferase catalytic subunit">
    <location>
        <begin position="1"/>
        <end position="308"/>
    </location>
</feature>
<feature type="binding site" evidence="1">
    <location>
        <position position="59"/>
    </location>
    <ligand>
        <name>carbamoyl phosphate</name>
        <dbReference type="ChEBI" id="CHEBI:58228"/>
    </ligand>
</feature>
<feature type="binding site" evidence="1">
    <location>
        <position position="60"/>
    </location>
    <ligand>
        <name>carbamoyl phosphate</name>
        <dbReference type="ChEBI" id="CHEBI:58228"/>
    </ligand>
</feature>
<feature type="binding site" evidence="1">
    <location>
        <position position="87"/>
    </location>
    <ligand>
        <name>L-aspartate</name>
        <dbReference type="ChEBI" id="CHEBI:29991"/>
    </ligand>
</feature>
<feature type="binding site" evidence="1">
    <location>
        <position position="109"/>
    </location>
    <ligand>
        <name>carbamoyl phosphate</name>
        <dbReference type="ChEBI" id="CHEBI:58228"/>
    </ligand>
</feature>
<feature type="binding site" evidence="1">
    <location>
        <position position="137"/>
    </location>
    <ligand>
        <name>carbamoyl phosphate</name>
        <dbReference type="ChEBI" id="CHEBI:58228"/>
    </ligand>
</feature>
<feature type="binding site" evidence="1">
    <location>
        <position position="140"/>
    </location>
    <ligand>
        <name>carbamoyl phosphate</name>
        <dbReference type="ChEBI" id="CHEBI:58228"/>
    </ligand>
</feature>
<feature type="binding site" evidence="1">
    <location>
        <position position="170"/>
    </location>
    <ligand>
        <name>L-aspartate</name>
        <dbReference type="ChEBI" id="CHEBI:29991"/>
    </ligand>
</feature>
<feature type="binding site" evidence="1">
    <location>
        <position position="224"/>
    </location>
    <ligand>
        <name>L-aspartate</name>
        <dbReference type="ChEBI" id="CHEBI:29991"/>
    </ligand>
</feature>
<feature type="binding site" evidence="1">
    <location>
        <position position="265"/>
    </location>
    <ligand>
        <name>carbamoyl phosphate</name>
        <dbReference type="ChEBI" id="CHEBI:58228"/>
    </ligand>
</feature>
<feature type="binding site" evidence="1">
    <location>
        <position position="266"/>
    </location>
    <ligand>
        <name>carbamoyl phosphate</name>
        <dbReference type="ChEBI" id="CHEBI:58228"/>
    </ligand>
</feature>
<dbReference type="EC" id="2.1.3.2" evidence="1"/>
<dbReference type="EMBL" id="CP000685">
    <property type="protein sequence ID" value="ABQ07544.1"/>
    <property type="molecule type" value="Genomic_DNA"/>
</dbReference>
<dbReference type="RefSeq" id="WP_012026510.1">
    <property type="nucleotide sequence ID" value="NC_009441.1"/>
</dbReference>
<dbReference type="SMR" id="A5FB79"/>
<dbReference type="STRING" id="376686.Fjoh_4545"/>
<dbReference type="KEGG" id="fjo:Fjoh_4545"/>
<dbReference type="eggNOG" id="COG0540">
    <property type="taxonomic scope" value="Bacteria"/>
</dbReference>
<dbReference type="HOGENOM" id="CLU_043846_2_0_10"/>
<dbReference type="OrthoDB" id="9774690at2"/>
<dbReference type="UniPathway" id="UPA00070">
    <property type="reaction ID" value="UER00116"/>
</dbReference>
<dbReference type="Proteomes" id="UP000006694">
    <property type="component" value="Chromosome"/>
</dbReference>
<dbReference type="GO" id="GO:0016597">
    <property type="term" value="F:amino acid binding"/>
    <property type="evidence" value="ECO:0007669"/>
    <property type="project" value="InterPro"/>
</dbReference>
<dbReference type="GO" id="GO:0004070">
    <property type="term" value="F:aspartate carbamoyltransferase activity"/>
    <property type="evidence" value="ECO:0007669"/>
    <property type="project" value="UniProtKB-UniRule"/>
</dbReference>
<dbReference type="GO" id="GO:0006207">
    <property type="term" value="P:'de novo' pyrimidine nucleobase biosynthetic process"/>
    <property type="evidence" value="ECO:0007669"/>
    <property type="project" value="InterPro"/>
</dbReference>
<dbReference type="GO" id="GO:0044205">
    <property type="term" value="P:'de novo' UMP biosynthetic process"/>
    <property type="evidence" value="ECO:0007669"/>
    <property type="project" value="UniProtKB-UniRule"/>
</dbReference>
<dbReference type="GO" id="GO:0006520">
    <property type="term" value="P:amino acid metabolic process"/>
    <property type="evidence" value="ECO:0007669"/>
    <property type="project" value="InterPro"/>
</dbReference>
<dbReference type="FunFam" id="3.40.50.1370:FF:000007">
    <property type="entry name" value="Aspartate carbamoyltransferase"/>
    <property type="match status" value="1"/>
</dbReference>
<dbReference type="Gene3D" id="3.40.50.1370">
    <property type="entry name" value="Aspartate/ornithine carbamoyltransferase"/>
    <property type="match status" value="2"/>
</dbReference>
<dbReference type="HAMAP" id="MF_00001">
    <property type="entry name" value="Asp_carb_tr"/>
    <property type="match status" value="1"/>
</dbReference>
<dbReference type="InterPro" id="IPR006132">
    <property type="entry name" value="Asp/Orn_carbamoyltranf_P-bd"/>
</dbReference>
<dbReference type="InterPro" id="IPR006130">
    <property type="entry name" value="Asp/Orn_carbamoylTrfase"/>
</dbReference>
<dbReference type="InterPro" id="IPR036901">
    <property type="entry name" value="Asp/Orn_carbamoylTrfase_sf"/>
</dbReference>
<dbReference type="InterPro" id="IPR002082">
    <property type="entry name" value="Asp_carbamoyltransf"/>
</dbReference>
<dbReference type="InterPro" id="IPR006131">
    <property type="entry name" value="Asp_carbamoyltransf_Asp/Orn-bd"/>
</dbReference>
<dbReference type="NCBIfam" id="TIGR00670">
    <property type="entry name" value="asp_carb_tr"/>
    <property type="match status" value="1"/>
</dbReference>
<dbReference type="NCBIfam" id="NF002032">
    <property type="entry name" value="PRK00856.1"/>
    <property type="match status" value="1"/>
</dbReference>
<dbReference type="PANTHER" id="PTHR45753:SF6">
    <property type="entry name" value="ASPARTATE CARBAMOYLTRANSFERASE"/>
    <property type="match status" value="1"/>
</dbReference>
<dbReference type="PANTHER" id="PTHR45753">
    <property type="entry name" value="ORNITHINE CARBAMOYLTRANSFERASE, MITOCHONDRIAL"/>
    <property type="match status" value="1"/>
</dbReference>
<dbReference type="Pfam" id="PF00185">
    <property type="entry name" value="OTCace"/>
    <property type="match status" value="1"/>
</dbReference>
<dbReference type="Pfam" id="PF02729">
    <property type="entry name" value="OTCace_N"/>
    <property type="match status" value="1"/>
</dbReference>
<dbReference type="PRINTS" id="PR00100">
    <property type="entry name" value="AOTCASE"/>
</dbReference>
<dbReference type="PRINTS" id="PR00101">
    <property type="entry name" value="ATCASE"/>
</dbReference>
<dbReference type="SUPFAM" id="SSF53671">
    <property type="entry name" value="Aspartate/ornithine carbamoyltransferase"/>
    <property type="match status" value="1"/>
</dbReference>
<dbReference type="PROSITE" id="PS00097">
    <property type="entry name" value="CARBAMOYLTRANSFERASE"/>
    <property type="match status" value="1"/>
</dbReference>
<keyword id="KW-0665">Pyrimidine biosynthesis</keyword>
<keyword id="KW-0808">Transferase</keyword>
<proteinExistence type="inferred from homology"/>
<evidence type="ECO:0000255" key="1">
    <source>
        <dbReference type="HAMAP-Rule" id="MF_00001"/>
    </source>
</evidence>
<organism>
    <name type="scientific">Flavobacterium johnsoniae (strain ATCC 17061 / DSM 2064 / JCM 8514 / BCRC 14874 / CCUG 350202 / NBRC 14942 / NCIMB 11054 / UW101)</name>
    <name type="common">Cytophaga johnsonae</name>
    <dbReference type="NCBI Taxonomy" id="376686"/>
    <lineage>
        <taxon>Bacteria</taxon>
        <taxon>Pseudomonadati</taxon>
        <taxon>Bacteroidota</taxon>
        <taxon>Flavobacteriia</taxon>
        <taxon>Flavobacteriales</taxon>
        <taxon>Flavobacteriaceae</taxon>
        <taxon>Flavobacterium</taxon>
    </lineage>
</organism>
<reference key="1">
    <citation type="journal article" date="2009" name="Appl. Environ. Microbiol.">
        <title>Novel features of the polysaccharide-digesting gliding bacterium Flavobacterium johnsoniae as revealed by genome sequence analysis.</title>
        <authorList>
            <person name="McBride M.J."/>
            <person name="Xie G."/>
            <person name="Martens E.C."/>
            <person name="Lapidus A."/>
            <person name="Henrissat B."/>
            <person name="Rhodes R.G."/>
            <person name="Goltsman E."/>
            <person name="Wang W."/>
            <person name="Xu J."/>
            <person name="Hunnicutt D.W."/>
            <person name="Staroscik A.M."/>
            <person name="Hoover T.R."/>
            <person name="Cheng Y.Q."/>
            <person name="Stein J.L."/>
        </authorList>
    </citation>
    <scope>NUCLEOTIDE SEQUENCE [LARGE SCALE GENOMIC DNA]</scope>
    <source>
        <strain>ATCC 17061 / DSM 2064 / JCM 8514 / BCRC 14874 / CCUG 350202 / NBRC 14942 / NCIMB 11054 / UW101</strain>
    </source>
</reference>
<comment type="function">
    <text evidence="1">Catalyzes the condensation of carbamoyl phosphate and aspartate to form carbamoyl aspartate and inorganic phosphate, the committed step in the de novo pyrimidine nucleotide biosynthesis pathway.</text>
</comment>
<comment type="catalytic activity">
    <reaction evidence="1">
        <text>carbamoyl phosphate + L-aspartate = N-carbamoyl-L-aspartate + phosphate + H(+)</text>
        <dbReference type="Rhea" id="RHEA:20013"/>
        <dbReference type="ChEBI" id="CHEBI:15378"/>
        <dbReference type="ChEBI" id="CHEBI:29991"/>
        <dbReference type="ChEBI" id="CHEBI:32814"/>
        <dbReference type="ChEBI" id="CHEBI:43474"/>
        <dbReference type="ChEBI" id="CHEBI:58228"/>
        <dbReference type="EC" id="2.1.3.2"/>
    </reaction>
</comment>
<comment type="pathway">
    <text evidence="1">Pyrimidine metabolism; UMP biosynthesis via de novo pathway; (S)-dihydroorotate from bicarbonate: step 2/3.</text>
</comment>
<comment type="subunit">
    <text evidence="1">Heterododecamer (2C3:3R2) of six catalytic PyrB chains organized as two trimers (C3), and six regulatory PyrI chains organized as three dimers (R2).</text>
</comment>
<comment type="similarity">
    <text evidence="1">Belongs to the aspartate/ornithine carbamoyltransferase superfamily. ATCase family.</text>
</comment>